<gene>
    <name evidence="1" type="primary">glyA</name>
    <name type="ordered locus">Z3827</name>
    <name type="ordered locus">ECs3417</name>
</gene>
<feature type="chain" id="PRO_0000113575" description="Serine hydroxymethyltransferase">
    <location>
        <begin position="1"/>
        <end position="417"/>
    </location>
</feature>
<feature type="binding site" evidence="1">
    <location>
        <position position="121"/>
    </location>
    <ligand>
        <name>(6S)-5,6,7,8-tetrahydrofolate</name>
        <dbReference type="ChEBI" id="CHEBI:57453"/>
    </ligand>
</feature>
<feature type="binding site" evidence="1">
    <location>
        <begin position="125"/>
        <end position="127"/>
    </location>
    <ligand>
        <name>(6S)-5,6,7,8-tetrahydrofolate</name>
        <dbReference type="ChEBI" id="CHEBI:57453"/>
    </ligand>
</feature>
<feature type="binding site" evidence="1">
    <location>
        <begin position="355"/>
        <end position="357"/>
    </location>
    <ligand>
        <name>(6S)-5,6,7,8-tetrahydrofolate</name>
        <dbReference type="ChEBI" id="CHEBI:57453"/>
    </ligand>
</feature>
<feature type="site" description="Plays an important role in substrate specificity" evidence="1">
    <location>
        <position position="228"/>
    </location>
</feature>
<feature type="modified residue" description="N6-acetyllysine" evidence="1">
    <location>
        <position position="54"/>
    </location>
</feature>
<feature type="modified residue" description="N6-(pyridoxal phosphate)lysine" evidence="1">
    <location>
        <position position="229"/>
    </location>
</feature>
<feature type="modified residue" description="N6-acetyllysine" evidence="1">
    <location>
        <position position="250"/>
    </location>
</feature>
<feature type="modified residue" description="N6-acetyllysine" evidence="1">
    <location>
        <position position="285"/>
    </location>
</feature>
<feature type="modified residue" description="N6-acetyllysine" evidence="1">
    <location>
        <position position="354"/>
    </location>
</feature>
<feature type="modified residue" description="N6-acetyllysine" evidence="1">
    <location>
        <position position="375"/>
    </location>
</feature>
<sequence length="417" mass="45345">MLKREMNIADYDAELWQAMEQEKVRQEEHIELIASENYTSPRVMQAQGSQLTNKYAEGYPGKRYYGGCEYVDIVEQLAIDRAKELFGADYANVQPHSGSQANFAVYTALLEPGDTVLGMNLAHGGHLTHGSPVNFSGKLYNIVPYGIDATGHIDYADLEKQAKEHKPKMIIGGFSAYSGVVDWAKMREIADSIGAYLFVDMAHVAGLVAAGVYPNPVPHAHVVTTTTHKTLAGPRGGLILAKGGSEELYKKLNSAVFPGGQGGPLMHVIAGKAVALKEAMEPEFKTYQQQVAKNAKAMVEVFLERGYKVVSGGTDNHLFLVDLVDKNLTGKEADAALGRANITVNKNSVPNDPKSPFVTSGIRVGTPAITRRGFKEVEAKELAGWMCDVLDSINDEAVIERIKGKVLDICARYPVYA</sequence>
<keyword id="KW-0007">Acetylation</keyword>
<keyword id="KW-0028">Amino-acid biosynthesis</keyword>
<keyword id="KW-0963">Cytoplasm</keyword>
<keyword id="KW-0554">One-carbon metabolism</keyword>
<keyword id="KW-0663">Pyridoxal phosphate</keyword>
<keyword id="KW-1185">Reference proteome</keyword>
<keyword id="KW-0808">Transferase</keyword>
<proteinExistence type="inferred from homology"/>
<protein>
    <recommendedName>
        <fullName evidence="1">Serine hydroxymethyltransferase</fullName>
        <shortName evidence="1">SHMT</shortName>
        <shortName evidence="1">Serine methylase</shortName>
        <ecNumber evidence="1">2.1.2.1</ecNumber>
    </recommendedName>
</protein>
<accession>Q8XA55</accession>
<name>GLYA_ECO57</name>
<evidence type="ECO:0000255" key="1">
    <source>
        <dbReference type="HAMAP-Rule" id="MF_00051"/>
    </source>
</evidence>
<comment type="function">
    <text evidence="1">Catalyzes the reversible interconversion of serine and glycine with tetrahydrofolate (THF) serving as the one-carbon carrier. This reaction serves as the major source of one-carbon groups required for the biosynthesis of purines, thymidylate, methionine, and other important biomolecules. Also exhibits THF-independent aldolase activity toward beta-hydroxyamino acids, producing glycine and aldehydes, via a retro-aldol mechanism.</text>
</comment>
<comment type="catalytic activity">
    <reaction evidence="1">
        <text>(6R)-5,10-methylene-5,6,7,8-tetrahydrofolate + glycine + H2O = (6S)-5,6,7,8-tetrahydrofolate + L-serine</text>
        <dbReference type="Rhea" id="RHEA:15481"/>
        <dbReference type="ChEBI" id="CHEBI:15377"/>
        <dbReference type="ChEBI" id="CHEBI:15636"/>
        <dbReference type="ChEBI" id="CHEBI:33384"/>
        <dbReference type="ChEBI" id="CHEBI:57305"/>
        <dbReference type="ChEBI" id="CHEBI:57453"/>
        <dbReference type="EC" id="2.1.2.1"/>
    </reaction>
</comment>
<comment type="cofactor">
    <cofactor evidence="1">
        <name>pyridoxal 5'-phosphate</name>
        <dbReference type="ChEBI" id="CHEBI:597326"/>
    </cofactor>
</comment>
<comment type="pathway">
    <text evidence="1">One-carbon metabolism; tetrahydrofolate interconversion.</text>
</comment>
<comment type="pathway">
    <text evidence="1">Amino-acid biosynthesis; glycine biosynthesis; glycine from L-serine: step 1/1.</text>
</comment>
<comment type="subunit">
    <text evidence="1">Homodimer.</text>
</comment>
<comment type="subcellular location">
    <subcellularLocation>
        <location evidence="1">Cytoplasm</location>
    </subcellularLocation>
</comment>
<comment type="similarity">
    <text evidence="1">Belongs to the SHMT family.</text>
</comment>
<dbReference type="EC" id="2.1.2.1" evidence="1"/>
<dbReference type="EMBL" id="AE005174">
    <property type="protein sequence ID" value="AAG57665.1"/>
    <property type="molecule type" value="Genomic_DNA"/>
</dbReference>
<dbReference type="EMBL" id="BA000007">
    <property type="protein sequence ID" value="BAB36840.1"/>
    <property type="molecule type" value="Genomic_DNA"/>
</dbReference>
<dbReference type="PIR" id="A91056">
    <property type="entry name" value="A91056"/>
</dbReference>
<dbReference type="PIR" id="E85900">
    <property type="entry name" value="E85900"/>
</dbReference>
<dbReference type="RefSeq" id="NP_311444.1">
    <property type="nucleotide sequence ID" value="NC_002695.1"/>
</dbReference>
<dbReference type="RefSeq" id="WP_000919165.1">
    <property type="nucleotide sequence ID" value="NZ_VOAI01000001.1"/>
</dbReference>
<dbReference type="SMR" id="Q8XA55"/>
<dbReference type="STRING" id="155864.Z3827"/>
<dbReference type="GeneID" id="914911"/>
<dbReference type="KEGG" id="ece:Z3827"/>
<dbReference type="KEGG" id="ecs:ECs_3417"/>
<dbReference type="PATRIC" id="fig|386585.9.peg.3570"/>
<dbReference type="eggNOG" id="COG0112">
    <property type="taxonomic scope" value="Bacteria"/>
</dbReference>
<dbReference type="HOGENOM" id="CLU_022477_2_1_6"/>
<dbReference type="OMA" id="CQFANVQ"/>
<dbReference type="UniPathway" id="UPA00193"/>
<dbReference type="UniPathway" id="UPA00288">
    <property type="reaction ID" value="UER01023"/>
</dbReference>
<dbReference type="Proteomes" id="UP000000558">
    <property type="component" value="Chromosome"/>
</dbReference>
<dbReference type="Proteomes" id="UP000002519">
    <property type="component" value="Chromosome"/>
</dbReference>
<dbReference type="GO" id="GO:0005829">
    <property type="term" value="C:cytosol"/>
    <property type="evidence" value="ECO:0007669"/>
    <property type="project" value="TreeGrafter"/>
</dbReference>
<dbReference type="GO" id="GO:0004372">
    <property type="term" value="F:glycine hydroxymethyltransferase activity"/>
    <property type="evidence" value="ECO:0007669"/>
    <property type="project" value="UniProtKB-UniRule"/>
</dbReference>
<dbReference type="GO" id="GO:0030170">
    <property type="term" value="F:pyridoxal phosphate binding"/>
    <property type="evidence" value="ECO:0007669"/>
    <property type="project" value="UniProtKB-UniRule"/>
</dbReference>
<dbReference type="GO" id="GO:0019264">
    <property type="term" value="P:glycine biosynthetic process from serine"/>
    <property type="evidence" value="ECO:0007669"/>
    <property type="project" value="UniProtKB-UniRule"/>
</dbReference>
<dbReference type="GO" id="GO:0035999">
    <property type="term" value="P:tetrahydrofolate interconversion"/>
    <property type="evidence" value="ECO:0007669"/>
    <property type="project" value="UniProtKB-UniRule"/>
</dbReference>
<dbReference type="CDD" id="cd00378">
    <property type="entry name" value="SHMT"/>
    <property type="match status" value="1"/>
</dbReference>
<dbReference type="FunFam" id="3.40.640.10:FF:000001">
    <property type="entry name" value="Serine hydroxymethyltransferase"/>
    <property type="match status" value="1"/>
</dbReference>
<dbReference type="FunFam" id="3.90.1150.10:FF:000003">
    <property type="entry name" value="Serine hydroxymethyltransferase"/>
    <property type="match status" value="1"/>
</dbReference>
<dbReference type="Gene3D" id="3.90.1150.10">
    <property type="entry name" value="Aspartate Aminotransferase, domain 1"/>
    <property type="match status" value="1"/>
</dbReference>
<dbReference type="Gene3D" id="3.40.640.10">
    <property type="entry name" value="Type I PLP-dependent aspartate aminotransferase-like (Major domain)"/>
    <property type="match status" value="1"/>
</dbReference>
<dbReference type="HAMAP" id="MF_00051">
    <property type="entry name" value="SHMT"/>
    <property type="match status" value="1"/>
</dbReference>
<dbReference type="InterPro" id="IPR015424">
    <property type="entry name" value="PyrdxlP-dep_Trfase"/>
</dbReference>
<dbReference type="InterPro" id="IPR015421">
    <property type="entry name" value="PyrdxlP-dep_Trfase_major"/>
</dbReference>
<dbReference type="InterPro" id="IPR015422">
    <property type="entry name" value="PyrdxlP-dep_Trfase_small"/>
</dbReference>
<dbReference type="InterPro" id="IPR001085">
    <property type="entry name" value="Ser_HO-MeTrfase"/>
</dbReference>
<dbReference type="InterPro" id="IPR049943">
    <property type="entry name" value="Ser_HO-MeTrfase-like"/>
</dbReference>
<dbReference type="InterPro" id="IPR019798">
    <property type="entry name" value="Ser_HO-MeTrfase_PLP_BS"/>
</dbReference>
<dbReference type="InterPro" id="IPR039429">
    <property type="entry name" value="SHMT-like_dom"/>
</dbReference>
<dbReference type="NCBIfam" id="NF000586">
    <property type="entry name" value="PRK00011.1"/>
    <property type="match status" value="1"/>
</dbReference>
<dbReference type="PANTHER" id="PTHR11680">
    <property type="entry name" value="SERINE HYDROXYMETHYLTRANSFERASE"/>
    <property type="match status" value="1"/>
</dbReference>
<dbReference type="PANTHER" id="PTHR11680:SF50">
    <property type="entry name" value="SERINE HYDROXYMETHYLTRANSFERASE"/>
    <property type="match status" value="1"/>
</dbReference>
<dbReference type="Pfam" id="PF00464">
    <property type="entry name" value="SHMT"/>
    <property type="match status" value="1"/>
</dbReference>
<dbReference type="PIRSF" id="PIRSF000412">
    <property type="entry name" value="SHMT"/>
    <property type="match status" value="1"/>
</dbReference>
<dbReference type="SUPFAM" id="SSF53383">
    <property type="entry name" value="PLP-dependent transferases"/>
    <property type="match status" value="1"/>
</dbReference>
<dbReference type="PROSITE" id="PS00096">
    <property type="entry name" value="SHMT"/>
    <property type="match status" value="1"/>
</dbReference>
<organism>
    <name type="scientific">Escherichia coli O157:H7</name>
    <dbReference type="NCBI Taxonomy" id="83334"/>
    <lineage>
        <taxon>Bacteria</taxon>
        <taxon>Pseudomonadati</taxon>
        <taxon>Pseudomonadota</taxon>
        <taxon>Gammaproteobacteria</taxon>
        <taxon>Enterobacterales</taxon>
        <taxon>Enterobacteriaceae</taxon>
        <taxon>Escherichia</taxon>
    </lineage>
</organism>
<reference key="1">
    <citation type="journal article" date="2001" name="Nature">
        <title>Genome sequence of enterohaemorrhagic Escherichia coli O157:H7.</title>
        <authorList>
            <person name="Perna N.T."/>
            <person name="Plunkett G. III"/>
            <person name="Burland V."/>
            <person name="Mau B."/>
            <person name="Glasner J.D."/>
            <person name="Rose D.J."/>
            <person name="Mayhew G.F."/>
            <person name="Evans P.S."/>
            <person name="Gregor J."/>
            <person name="Kirkpatrick H.A."/>
            <person name="Posfai G."/>
            <person name="Hackett J."/>
            <person name="Klink S."/>
            <person name="Boutin A."/>
            <person name="Shao Y."/>
            <person name="Miller L."/>
            <person name="Grotbeck E.J."/>
            <person name="Davis N.W."/>
            <person name="Lim A."/>
            <person name="Dimalanta E.T."/>
            <person name="Potamousis K."/>
            <person name="Apodaca J."/>
            <person name="Anantharaman T.S."/>
            <person name="Lin J."/>
            <person name="Yen G."/>
            <person name="Schwartz D.C."/>
            <person name="Welch R.A."/>
            <person name="Blattner F.R."/>
        </authorList>
    </citation>
    <scope>NUCLEOTIDE SEQUENCE [LARGE SCALE GENOMIC DNA]</scope>
    <source>
        <strain>O157:H7 / EDL933 / ATCC 700927 / EHEC</strain>
    </source>
</reference>
<reference key="2">
    <citation type="journal article" date="2001" name="DNA Res.">
        <title>Complete genome sequence of enterohemorrhagic Escherichia coli O157:H7 and genomic comparison with a laboratory strain K-12.</title>
        <authorList>
            <person name="Hayashi T."/>
            <person name="Makino K."/>
            <person name="Ohnishi M."/>
            <person name="Kurokawa K."/>
            <person name="Ishii K."/>
            <person name="Yokoyama K."/>
            <person name="Han C.-G."/>
            <person name="Ohtsubo E."/>
            <person name="Nakayama K."/>
            <person name="Murata T."/>
            <person name="Tanaka M."/>
            <person name="Tobe T."/>
            <person name="Iida T."/>
            <person name="Takami H."/>
            <person name="Honda T."/>
            <person name="Sasakawa C."/>
            <person name="Ogasawara N."/>
            <person name="Yasunaga T."/>
            <person name="Kuhara S."/>
            <person name="Shiba T."/>
            <person name="Hattori M."/>
            <person name="Shinagawa H."/>
        </authorList>
    </citation>
    <scope>NUCLEOTIDE SEQUENCE [LARGE SCALE GENOMIC DNA]</scope>
    <source>
        <strain>O157:H7 / Sakai / RIMD 0509952 / EHEC</strain>
    </source>
</reference>